<name>SLYX_MARMM</name>
<reference key="1">
    <citation type="submission" date="2006-08" db="EMBL/GenBank/DDBJ databases">
        <title>Complete sequence of Maricaulis maris MCS10.</title>
        <authorList>
            <consortium name="US DOE Joint Genome Institute"/>
            <person name="Copeland A."/>
            <person name="Lucas S."/>
            <person name="Lapidus A."/>
            <person name="Barry K."/>
            <person name="Detter J.C."/>
            <person name="Glavina del Rio T."/>
            <person name="Hammon N."/>
            <person name="Israni S."/>
            <person name="Dalin E."/>
            <person name="Tice H."/>
            <person name="Pitluck S."/>
            <person name="Saunders E."/>
            <person name="Brettin T."/>
            <person name="Bruce D."/>
            <person name="Han C."/>
            <person name="Tapia R."/>
            <person name="Gilna P."/>
            <person name="Schmutz J."/>
            <person name="Larimer F."/>
            <person name="Land M."/>
            <person name="Hauser L."/>
            <person name="Kyrpides N."/>
            <person name="Mikhailova N."/>
            <person name="Viollier P."/>
            <person name="Stephens C."/>
            <person name="Richardson P."/>
        </authorList>
    </citation>
    <scope>NUCLEOTIDE SEQUENCE [LARGE SCALE GENOMIC DNA]</scope>
    <source>
        <strain>MCS10</strain>
    </source>
</reference>
<feature type="chain" id="PRO_1000045719" description="Protein SlyX homolog">
    <location>
        <begin position="1"/>
        <end position="69"/>
    </location>
</feature>
<dbReference type="EMBL" id="CP000449">
    <property type="protein sequence ID" value="ABI65483.1"/>
    <property type="molecule type" value="Genomic_DNA"/>
</dbReference>
<dbReference type="RefSeq" id="WP_011643130.1">
    <property type="nucleotide sequence ID" value="NC_008347.1"/>
</dbReference>
<dbReference type="SMR" id="Q0AQF4"/>
<dbReference type="STRING" id="394221.Mmar10_1190"/>
<dbReference type="KEGG" id="mmr:Mmar10_1190"/>
<dbReference type="eggNOG" id="COG2900">
    <property type="taxonomic scope" value="Bacteria"/>
</dbReference>
<dbReference type="HOGENOM" id="CLU_180796_5_3_5"/>
<dbReference type="Proteomes" id="UP000001964">
    <property type="component" value="Chromosome"/>
</dbReference>
<dbReference type="HAMAP" id="MF_00715">
    <property type="entry name" value="SlyX"/>
    <property type="match status" value="1"/>
</dbReference>
<dbReference type="InterPro" id="IPR007236">
    <property type="entry name" value="SlyX"/>
</dbReference>
<dbReference type="PANTHER" id="PTHR36508">
    <property type="entry name" value="PROTEIN SLYX"/>
    <property type="match status" value="1"/>
</dbReference>
<dbReference type="PANTHER" id="PTHR36508:SF1">
    <property type="entry name" value="PROTEIN SLYX"/>
    <property type="match status" value="1"/>
</dbReference>
<dbReference type="Pfam" id="PF04102">
    <property type="entry name" value="SlyX"/>
    <property type="match status" value="1"/>
</dbReference>
<sequence length="69" mass="7771">MIDTLQARLDEVEAHAAHQDKAVDDLNAVILDQREELDRLTRRVNVMLTRLEALEAAAPGPEVTKPPHY</sequence>
<comment type="similarity">
    <text evidence="1">Belongs to the SlyX family.</text>
</comment>
<gene>
    <name evidence="1" type="primary">slyX</name>
    <name type="ordered locus">Mmar10_1190</name>
</gene>
<accession>Q0AQF4</accession>
<protein>
    <recommendedName>
        <fullName evidence="1">Protein SlyX homolog</fullName>
    </recommendedName>
</protein>
<proteinExistence type="inferred from homology"/>
<organism>
    <name type="scientific">Maricaulis maris (strain MCS10)</name>
    <name type="common">Caulobacter maris</name>
    <dbReference type="NCBI Taxonomy" id="394221"/>
    <lineage>
        <taxon>Bacteria</taxon>
        <taxon>Pseudomonadati</taxon>
        <taxon>Pseudomonadota</taxon>
        <taxon>Alphaproteobacteria</taxon>
        <taxon>Maricaulales</taxon>
        <taxon>Maricaulaceae</taxon>
        <taxon>Maricaulis</taxon>
    </lineage>
</organism>
<evidence type="ECO:0000255" key="1">
    <source>
        <dbReference type="HAMAP-Rule" id="MF_00715"/>
    </source>
</evidence>
<keyword id="KW-1185">Reference proteome</keyword>